<comment type="function">
    <text evidence="1">Converts heme B (protoheme IX) to heme O by substitution of the vinyl group on carbon 2 of heme B porphyrin ring with a hydroxyethyl farnesyl side group.</text>
</comment>
<comment type="catalytic activity">
    <reaction evidence="1">
        <text>heme b + (2E,6E)-farnesyl diphosphate + H2O = Fe(II)-heme o + diphosphate</text>
        <dbReference type="Rhea" id="RHEA:28070"/>
        <dbReference type="ChEBI" id="CHEBI:15377"/>
        <dbReference type="ChEBI" id="CHEBI:33019"/>
        <dbReference type="ChEBI" id="CHEBI:60344"/>
        <dbReference type="ChEBI" id="CHEBI:60530"/>
        <dbReference type="ChEBI" id="CHEBI:175763"/>
        <dbReference type="EC" id="2.5.1.141"/>
    </reaction>
</comment>
<comment type="pathway">
    <text evidence="1">Porphyrin-containing compound metabolism; heme O biosynthesis; heme O from protoheme: step 1/1.</text>
</comment>
<comment type="subcellular location">
    <subcellularLocation>
        <location evidence="1">Cell inner membrane</location>
        <topology evidence="1">Multi-pass membrane protein</topology>
    </subcellularLocation>
</comment>
<comment type="miscellaneous">
    <text evidence="1">Carbon 2 of the heme B porphyrin ring is defined according to the Fischer nomenclature.</text>
</comment>
<comment type="similarity">
    <text evidence="1">Belongs to the UbiA prenyltransferase family. Protoheme IX farnesyltransferase subfamily.</text>
</comment>
<evidence type="ECO:0000255" key="1">
    <source>
        <dbReference type="HAMAP-Rule" id="MF_00154"/>
    </source>
</evidence>
<accession>A6UXP9</accession>
<name>CYOE1_PSEP7</name>
<dbReference type="EC" id="2.5.1.141" evidence="1"/>
<dbReference type="EMBL" id="CP000744">
    <property type="protein sequence ID" value="ABR84840.1"/>
    <property type="molecule type" value="Genomic_DNA"/>
</dbReference>
<dbReference type="RefSeq" id="WP_011979160.1">
    <property type="nucleotide sequence ID" value="NC_009656.1"/>
</dbReference>
<dbReference type="SMR" id="A6UXP9"/>
<dbReference type="GeneID" id="77218659"/>
<dbReference type="KEGG" id="pap:PSPA7_0188"/>
<dbReference type="HOGENOM" id="CLU_029631_0_2_6"/>
<dbReference type="UniPathway" id="UPA00834">
    <property type="reaction ID" value="UER00712"/>
</dbReference>
<dbReference type="Proteomes" id="UP000001582">
    <property type="component" value="Chromosome"/>
</dbReference>
<dbReference type="GO" id="GO:0005886">
    <property type="term" value="C:plasma membrane"/>
    <property type="evidence" value="ECO:0007669"/>
    <property type="project" value="UniProtKB-SubCell"/>
</dbReference>
<dbReference type="GO" id="GO:0008495">
    <property type="term" value="F:protoheme IX farnesyltransferase activity"/>
    <property type="evidence" value="ECO:0007669"/>
    <property type="project" value="UniProtKB-UniRule"/>
</dbReference>
<dbReference type="GO" id="GO:0048034">
    <property type="term" value="P:heme O biosynthetic process"/>
    <property type="evidence" value="ECO:0007669"/>
    <property type="project" value="UniProtKB-UniRule"/>
</dbReference>
<dbReference type="CDD" id="cd13957">
    <property type="entry name" value="PT_UbiA_Cox10"/>
    <property type="match status" value="1"/>
</dbReference>
<dbReference type="FunFam" id="1.10.357.140:FF:000001">
    <property type="entry name" value="Protoheme IX farnesyltransferase"/>
    <property type="match status" value="1"/>
</dbReference>
<dbReference type="Gene3D" id="1.10.357.140">
    <property type="entry name" value="UbiA prenyltransferase"/>
    <property type="match status" value="1"/>
</dbReference>
<dbReference type="HAMAP" id="MF_00154">
    <property type="entry name" value="CyoE_CtaB"/>
    <property type="match status" value="1"/>
</dbReference>
<dbReference type="InterPro" id="IPR006369">
    <property type="entry name" value="Protohaem_IX_farnesylTrfase"/>
</dbReference>
<dbReference type="InterPro" id="IPR000537">
    <property type="entry name" value="UbiA_prenyltransferase"/>
</dbReference>
<dbReference type="InterPro" id="IPR030470">
    <property type="entry name" value="UbiA_prenylTrfase_CS"/>
</dbReference>
<dbReference type="InterPro" id="IPR044878">
    <property type="entry name" value="UbiA_sf"/>
</dbReference>
<dbReference type="NCBIfam" id="TIGR01473">
    <property type="entry name" value="cyoE_ctaB"/>
    <property type="match status" value="1"/>
</dbReference>
<dbReference type="NCBIfam" id="NF003349">
    <property type="entry name" value="PRK04375.1-2"/>
    <property type="match status" value="1"/>
</dbReference>
<dbReference type="PANTHER" id="PTHR43448:SF7">
    <property type="entry name" value="4-HYDROXYBENZOATE SOLANESYLTRANSFERASE"/>
    <property type="match status" value="1"/>
</dbReference>
<dbReference type="PANTHER" id="PTHR43448">
    <property type="entry name" value="PROTOHEME IX FARNESYLTRANSFERASE, MITOCHONDRIAL"/>
    <property type="match status" value="1"/>
</dbReference>
<dbReference type="Pfam" id="PF01040">
    <property type="entry name" value="UbiA"/>
    <property type="match status" value="1"/>
</dbReference>
<dbReference type="PROSITE" id="PS00943">
    <property type="entry name" value="UBIA"/>
    <property type="match status" value="1"/>
</dbReference>
<gene>
    <name evidence="1" type="primary">cyoE1</name>
    <name type="ordered locus">PSPA7_0188</name>
</gene>
<feature type="chain" id="PRO_0000346000" description="Protoheme IX farnesyltransferase 1">
    <location>
        <begin position="1"/>
        <end position="304"/>
    </location>
</feature>
<feature type="transmembrane region" description="Helical" evidence="1">
    <location>
        <begin position="24"/>
        <end position="44"/>
    </location>
</feature>
<feature type="transmembrane region" description="Helical" evidence="1">
    <location>
        <begin position="47"/>
        <end position="67"/>
    </location>
</feature>
<feature type="transmembrane region" description="Helical" evidence="1">
    <location>
        <begin position="99"/>
        <end position="119"/>
    </location>
</feature>
<feature type="transmembrane region" description="Helical" evidence="1">
    <location>
        <begin position="122"/>
        <end position="142"/>
    </location>
</feature>
<feature type="transmembrane region" description="Helical" evidence="1">
    <location>
        <begin position="150"/>
        <end position="170"/>
    </location>
</feature>
<feature type="transmembrane region" description="Helical" evidence="1">
    <location>
        <begin position="176"/>
        <end position="196"/>
    </location>
</feature>
<feature type="transmembrane region" description="Helical" evidence="1">
    <location>
        <begin position="228"/>
        <end position="248"/>
    </location>
</feature>
<feature type="transmembrane region" description="Helical" evidence="1">
    <location>
        <begin position="280"/>
        <end position="300"/>
    </location>
</feature>
<organism>
    <name type="scientific">Pseudomonas paraeruginosa (strain DSM 24068 / PA7)</name>
    <name type="common">Pseudomonas aeruginosa (strain PA7)</name>
    <dbReference type="NCBI Taxonomy" id="381754"/>
    <lineage>
        <taxon>Bacteria</taxon>
        <taxon>Pseudomonadati</taxon>
        <taxon>Pseudomonadota</taxon>
        <taxon>Gammaproteobacteria</taxon>
        <taxon>Pseudomonadales</taxon>
        <taxon>Pseudomonadaceae</taxon>
        <taxon>Pseudomonas</taxon>
        <taxon>Pseudomonas paraeruginosa</taxon>
    </lineage>
</organism>
<protein>
    <recommendedName>
        <fullName evidence="1">Protoheme IX farnesyltransferase 1</fullName>
        <ecNumber evidence="1">2.5.1.141</ecNumber>
    </recommendedName>
    <alternativeName>
        <fullName evidence="1">Heme B farnesyltransferase 1</fullName>
    </alternativeName>
    <alternativeName>
        <fullName evidence="1">Heme O synthase 1</fullName>
    </alternativeName>
</protein>
<keyword id="KW-0997">Cell inner membrane</keyword>
<keyword id="KW-1003">Cell membrane</keyword>
<keyword id="KW-0350">Heme biosynthesis</keyword>
<keyword id="KW-0472">Membrane</keyword>
<keyword id="KW-0808">Transferase</keyword>
<keyword id="KW-0812">Transmembrane</keyword>
<keyword id="KW-1133">Transmembrane helix</keyword>
<reference key="1">
    <citation type="submission" date="2007-06" db="EMBL/GenBank/DDBJ databases">
        <authorList>
            <person name="Dodson R.J."/>
            <person name="Harkins D."/>
            <person name="Paulsen I.T."/>
        </authorList>
    </citation>
    <scope>NUCLEOTIDE SEQUENCE [LARGE SCALE GENOMIC DNA]</scope>
    <source>
        <strain>DSM 24068 / PA7</strain>
    </source>
</reference>
<sequence length="304" mass="33458">MATVIDRHSQPTWRDFLELTKPKVVVLMLITSLIGMLLATKAPLDGFVPWQVLIFGNLGIGLCAGAAAAVNHVVDRRIDSIMARTHKRPLAEGRVSPSMALGFALLLALAGMAVLLAFTNPLTAWLTLASLLGYAALYTGFLKRATPQNIVIGGLAGAAPPLLGWVAITGHLSAEPLLLVLIIFAWTPPHFWALCIHRKDEYAKADIPMLPVTHGERYTKLHILLYTLVLFAVSLMPFVIHMSGLVYLLCALALGARFLDWAWALYCDSRPHAAIRTFKYSIVYLFLLFMALLVDHYLPLKLLL</sequence>
<proteinExistence type="inferred from homology"/>